<sequence>MEWYMGKYIRPLSDAVFTIASDDLWIESLAIQQLHTTANLPNMQRVVGMPDLHPGRGYPIGAAFFSVGRFYPARRRGNGAGNRNGPLL</sequence>
<accession>P75675</accession>
<accession>Q9WVU0</accession>
<comment type="caution">
    <text evidence="1">Could be the product of a pseudogene.</text>
</comment>
<proteinExistence type="uncertain"/>
<keyword id="KW-1185">Reference proteome</keyword>
<evidence type="ECO:0000305" key="1"/>
<reference key="1">
    <citation type="journal article" date="1997" name="Science">
        <title>The complete genome sequence of Escherichia coli K-12.</title>
        <authorList>
            <person name="Blattner F.R."/>
            <person name="Plunkett G. III"/>
            <person name="Bloch C.A."/>
            <person name="Perna N.T."/>
            <person name="Burland V."/>
            <person name="Riley M."/>
            <person name="Collado-Vides J."/>
            <person name="Glasner J.D."/>
            <person name="Rode C.K."/>
            <person name="Mayhew G.F."/>
            <person name="Gregor J."/>
            <person name="Davis N.W."/>
            <person name="Kirkpatrick H.A."/>
            <person name="Goeden M.A."/>
            <person name="Rose D.J."/>
            <person name="Mau B."/>
            <person name="Shao Y."/>
        </authorList>
    </citation>
    <scope>NUCLEOTIDE SEQUENCE [LARGE SCALE GENOMIC DNA]</scope>
    <source>
        <strain>K12 / MG1655 / ATCC 47076</strain>
    </source>
</reference>
<reference key="2">
    <citation type="journal article" date="2006" name="Mol. Syst. Biol.">
        <title>Highly accurate genome sequences of Escherichia coli K-12 strains MG1655 and W3110.</title>
        <authorList>
            <person name="Hayashi K."/>
            <person name="Morooka N."/>
            <person name="Yamamoto Y."/>
            <person name="Fujita K."/>
            <person name="Isono K."/>
            <person name="Choi S."/>
            <person name="Ohtsubo E."/>
            <person name="Baba T."/>
            <person name="Wanner B.L."/>
            <person name="Mori H."/>
            <person name="Horiuchi T."/>
        </authorList>
    </citation>
    <scope>NUCLEOTIDE SEQUENCE [LARGE SCALE GENOMIC DNA]</scope>
    <source>
        <strain>K12 / W3110 / ATCC 27325 / DSM 5911</strain>
    </source>
</reference>
<name>YKFJ_ECOLI</name>
<gene>
    <name type="primary">ykfJ</name>
    <name type="ordered locus">b0235</name>
    <name type="ordered locus">JW0225</name>
</gene>
<organism>
    <name type="scientific">Escherichia coli (strain K12)</name>
    <dbReference type="NCBI Taxonomy" id="83333"/>
    <lineage>
        <taxon>Bacteria</taxon>
        <taxon>Pseudomonadati</taxon>
        <taxon>Pseudomonadota</taxon>
        <taxon>Gammaproteobacteria</taxon>
        <taxon>Enterobacterales</taxon>
        <taxon>Enterobacteriaceae</taxon>
        <taxon>Escherichia</taxon>
    </lineage>
</organism>
<protein>
    <recommendedName>
        <fullName>Putative uncharacterized protein YkfJ</fullName>
    </recommendedName>
</protein>
<feature type="chain" id="PRO_0000168552" description="Putative uncharacterized protein YkfJ">
    <location>
        <begin position="1"/>
        <end position="88"/>
    </location>
</feature>
<dbReference type="EMBL" id="U00096">
    <property type="status" value="NOT_ANNOTATED_CDS"/>
    <property type="molecule type" value="Genomic_DNA"/>
</dbReference>
<dbReference type="EMBL" id="AP009048">
    <property type="protein sequence ID" value="BAA77904.2"/>
    <property type="molecule type" value="Genomic_DNA"/>
</dbReference>
<dbReference type="PIR" id="D64748">
    <property type="entry name" value="D64748"/>
</dbReference>
<dbReference type="SMR" id="P75675"/>
<dbReference type="BioGRID" id="4260826">
    <property type="interactions" value="42"/>
</dbReference>
<dbReference type="DIP" id="DIP-48205N"/>
<dbReference type="FunCoup" id="P75675">
    <property type="interactions" value="33"/>
</dbReference>
<dbReference type="IntAct" id="P75675">
    <property type="interactions" value="8"/>
</dbReference>
<dbReference type="KEGG" id="ecj:JW0225"/>
<dbReference type="KEGG" id="ecoc:C3026_01115"/>
<dbReference type="PATRIC" id="fig|83333.103.peg.986"/>
<dbReference type="EchoBASE" id="EB4112"/>
<dbReference type="eggNOG" id="COG1690">
    <property type="taxonomic scope" value="Bacteria"/>
</dbReference>
<dbReference type="HOGENOM" id="CLU_2522548_0_0_6"/>
<dbReference type="InParanoid" id="P75675"/>
<dbReference type="OrthoDB" id="9802323at2"/>
<dbReference type="Proteomes" id="UP000000625">
    <property type="component" value="Chromosome"/>
</dbReference>
<dbReference type="GO" id="GO:0006396">
    <property type="term" value="P:RNA processing"/>
    <property type="evidence" value="ECO:0007669"/>
    <property type="project" value="InterPro"/>
</dbReference>
<dbReference type="Gene3D" id="3.90.1860.10">
    <property type="entry name" value="tRNA-splicing ligase RtcB"/>
    <property type="match status" value="1"/>
</dbReference>
<dbReference type="InterPro" id="IPR036025">
    <property type="entry name" value="RtcB-like_sf"/>
</dbReference>
<dbReference type="SUPFAM" id="SSF103365">
    <property type="entry name" value="Hypothetical protein PH1602"/>
    <property type="match status" value="1"/>
</dbReference>